<comment type="function">
    <text evidence="1">Acts as a chaperone.</text>
</comment>
<comment type="induction">
    <text evidence="1">By stress conditions e.g. heat shock.</text>
</comment>
<comment type="similarity">
    <text evidence="1">Belongs to the heat shock protein 70 family.</text>
</comment>
<accession>Q48RR3</accession>
<gene>
    <name evidence="1" type="primary">dnaK</name>
    <name type="ordered locus">M28_Spy1487</name>
</gene>
<dbReference type="EMBL" id="CP000056">
    <property type="protein sequence ID" value="AAX72597.1"/>
    <property type="molecule type" value="Genomic_DNA"/>
</dbReference>
<dbReference type="RefSeq" id="WP_011285091.1">
    <property type="nucleotide sequence ID" value="NC_007296.2"/>
</dbReference>
<dbReference type="SMR" id="Q48RR3"/>
<dbReference type="KEGG" id="spb:M28_Spy1487"/>
<dbReference type="HOGENOM" id="CLU_005965_2_1_9"/>
<dbReference type="GO" id="GO:0005524">
    <property type="term" value="F:ATP binding"/>
    <property type="evidence" value="ECO:0007669"/>
    <property type="project" value="UniProtKB-UniRule"/>
</dbReference>
<dbReference type="GO" id="GO:0140662">
    <property type="term" value="F:ATP-dependent protein folding chaperone"/>
    <property type="evidence" value="ECO:0007669"/>
    <property type="project" value="InterPro"/>
</dbReference>
<dbReference type="GO" id="GO:0051082">
    <property type="term" value="F:unfolded protein binding"/>
    <property type="evidence" value="ECO:0007669"/>
    <property type="project" value="InterPro"/>
</dbReference>
<dbReference type="CDD" id="cd10234">
    <property type="entry name" value="ASKHA_NBD_HSP70_DnaK-like"/>
    <property type="match status" value="1"/>
</dbReference>
<dbReference type="FunFam" id="2.60.34.10:FF:000014">
    <property type="entry name" value="Chaperone protein DnaK HSP70"/>
    <property type="match status" value="1"/>
</dbReference>
<dbReference type="FunFam" id="3.30.420.40:FF:000071">
    <property type="entry name" value="Molecular chaperone DnaK"/>
    <property type="match status" value="1"/>
</dbReference>
<dbReference type="FunFam" id="3.90.640.10:FF:000003">
    <property type="entry name" value="Molecular chaperone DnaK"/>
    <property type="match status" value="1"/>
</dbReference>
<dbReference type="Gene3D" id="1.20.1270.10">
    <property type="match status" value="1"/>
</dbReference>
<dbReference type="Gene3D" id="3.30.420.40">
    <property type="match status" value="2"/>
</dbReference>
<dbReference type="Gene3D" id="3.90.640.10">
    <property type="entry name" value="Actin, Chain A, domain 4"/>
    <property type="match status" value="1"/>
</dbReference>
<dbReference type="Gene3D" id="2.60.34.10">
    <property type="entry name" value="Substrate Binding Domain Of DNAk, Chain A, domain 1"/>
    <property type="match status" value="1"/>
</dbReference>
<dbReference type="HAMAP" id="MF_00332">
    <property type="entry name" value="DnaK"/>
    <property type="match status" value="1"/>
</dbReference>
<dbReference type="InterPro" id="IPR043129">
    <property type="entry name" value="ATPase_NBD"/>
</dbReference>
<dbReference type="InterPro" id="IPR012725">
    <property type="entry name" value="Chaperone_DnaK"/>
</dbReference>
<dbReference type="InterPro" id="IPR018181">
    <property type="entry name" value="Heat_shock_70_CS"/>
</dbReference>
<dbReference type="InterPro" id="IPR029048">
    <property type="entry name" value="HSP70_C_sf"/>
</dbReference>
<dbReference type="InterPro" id="IPR029047">
    <property type="entry name" value="HSP70_peptide-bd_sf"/>
</dbReference>
<dbReference type="InterPro" id="IPR013126">
    <property type="entry name" value="Hsp_70_fam"/>
</dbReference>
<dbReference type="NCBIfam" id="NF001413">
    <property type="entry name" value="PRK00290.1"/>
    <property type="match status" value="1"/>
</dbReference>
<dbReference type="NCBIfam" id="TIGR02350">
    <property type="entry name" value="prok_dnaK"/>
    <property type="match status" value="1"/>
</dbReference>
<dbReference type="PANTHER" id="PTHR19375">
    <property type="entry name" value="HEAT SHOCK PROTEIN 70KDA"/>
    <property type="match status" value="1"/>
</dbReference>
<dbReference type="Pfam" id="PF00012">
    <property type="entry name" value="HSP70"/>
    <property type="match status" value="1"/>
</dbReference>
<dbReference type="PRINTS" id="PR00301">
    <property type="entry name" value="HEATSHOCK70"/>
</dbReference>
<dbReference type="SUPFAM" id="SSF53067">
    <property type="entry name" value="Actin-like ATPase domain"/>
    <property type="match status" value="2"/>
</dbReference>
<dbReference type="SUPFAM" id="SSF100934">
    <property type="entry name" value="Heat shock protein 70kD (HSP70), C-terminal subdomain"/>
    <property type="match status" value="1"/>
</dbReference>
<dbReference type="SUPFAM" id="SSF100920">
    <property type="entry name" value="Heat shock protein 70kD (HSP70), peptide-binding domain"/>
    <property type="match status" value="1"/>
</dbReference>
<dbReference type="PROSITE" id="PS00297">
    <property type="entry name" value="HSP70_1"/>
    <property type="match status" value="1"/>
</dbReference>
<dbReference type="PROSITE" id="PS00329">
    <property type="entry name" value="HSP70_2"/>
    <property type="match status" value="1"/>
</dbReference>
<dbReference type="PROSITE" id="PS01036">
    <property type="entry name" value="HSP70_3"/>
    <property type="match status" value="1"/>
</dbReference>
<evidence type="ECO:0000255" key="1">
    <source>
        <dbReference type="HAMAP-Rule" id="MF_00332"/>
    </source>
</evidence>
<evidence type="ECO:0000256" key="2">
    <source>
        <dbReference type="SAM" id="MobiDB-lite"/>
    </source>
</evidence>
<keyword id="KW-0067">ATP-binding</keyword>
<keyword id="KW-0143">Chaperone</keyword>
<keyword id="KW-0547">Nucleotide-binding</keyword>
<keyword id="KW-0597">Phosphoprotein</keyword>
<keyword id="KW-0346">Stress response</keyword>
<protein>
    <recommendedName>
        <fullName evidence="1">Chaperone protein DnaK</fullName>
    </recommendedName>
    <alternativeName>
        <fullName evidence="1">HSP70</fullName>
    </alternativeName>
    <alternativeName>
        <fullName evidence="1">Heat shock 70 kDa protein</fullName>
    </alternativeName>
    <alternativeName>
        <fullName evidence="1">Heat shock protein 70</fullName>
    </alternativeName>
</protein>
<proteinExistence type="inferred from homology"/>
<sequence length="608" mass="64948">MSKIIGIDLGTTNSAVAVLEGTESKIIANPEGNRTTPSVVSFKNGEIIVGDAAKRQAVTNPETVISIKSKMGTSEKVSANGKEYTPQEISAMILQYLKGYAEDYLGEKVEKAVITVPAYFNDAQRQATKDAGKIAGLEVERIVNEPTAAALAYGMDKTDKDEKILVFDLGGGTFDVSILELGDGVFDVLATAGDNKLGGDDFDQKIIDFLVAEFKKENGIDLSQDKMALQRLKDAAEKAKKDLSGVTQTQISLPFITAGSAGPLHLEMSLSRAKFDDLTRDLVERTKTPVRQALSDAGLSLSEIDEVILVGGSTRIPAVVEAVKAETGKEPNKSVNPDEVVAMGAAIQGGVITGDVKDVVLLDVTPLSLGIETMGGVFTKLIDRNTTIPTSKSQVFSTAADNQPAVDIHVLQGERPMAADNKTLGRFQLTDIPAAPRGIPQIEVTFDIDKNGIVSVKAKDLGTQKEQHIVIKSNDGLSEEEIDRMMKDAEANAEADAKRKEEVDLKNEVDQAIFATEKTIKETEGKGFDTERDAAQSALDELKAAQESGNLDDMKAKLEALNEKAQALAVKMYEQAVAAQQAAQGAEGAQANDSANNDDVVDGEFTEK</sequence>
<feature type="chain" id="PRO_0000226015" description="Chaperone protein DnaK">
    <location>
        <begin position="1"/>
        <end position="608"/>
    </location>
</feature>
<feature type="region of interest" description="Disordered" evidence="2">
    <location>
        <begin position="580"/>
        <end position="608"/>
    </location>
</feature>
<feature type="compositionally biased region" description="Low complexity" evidence="2">
    <location>
        <begin position="580"/>
        <end position="598"/>
    </location>
</feature>
<feature type="compositionally biased region" description="Acidic residues" evidence="2">
    <location>
        <begin position="599"/>
        <end position="608"/>
    </location>
</feature>
<feature type="modified residue" description="Phosphothreonine; by autocatalysis" evidence="1">
    <location>
        <position position="173"/>
    </location>
</feature>
<name>DNAK_STRPM</name>
<organism>
    <name type="scientific">Streptococcus pyogenes serotype M28 (strain MGAS6180)</name>
    <dbReference type="NCBI Taxonomy" id="319701"/>
    <lineage>
        <taxon>Bacteria</taxon>
        <taxon>Bacillati</taxon>
        <taxon>Bacillota</taxon>
        <taxon>Bacilli</taxon>
        <taxon>Lactobacillales</taxon>
        <taxon>Streptococcaceae</taxon>
        <taxon>Streptococcus</taxon>
    </lineage>
</organism>
<reference key="1">
    <citation type="journal article" date="2005" name="J. Infect. Dis.">
        <title>Genome sequence of a serotype M28 strain of group A Streptococcus: potential new insights into puerperal sepsis and bacterial disease specificity.</title>
        <authorList>
            <person name="Green N.M."/>
            <person name="Zhang S."/>
            <person name="Porcella S.F."/>
            <person name="Nagiec M.J."/>
            <person name="Barbian K.D."/>
            <person name="Beres S.B."/>
            <person name="Lefebvre R.B."/>
            <person name="Musser J.M."/>
        </authorList>
    </citation>
    <scope>NUCLEOTIDE SEQUENCE [LARGE SCALE GENOMIC DNA]</scope>
    <source>
        <strain>MGAS6180</strain>
    </source>
</reference>